<gene>
    <name evidence="1" type="primary">queA</name>
    <name type="ordered locus">TT_C0693</name>
</gene>
<organism>
    <name type="scientific">Thermus thermophilus (strain ATCC BAA-163 / DSM 7039 / HB27)</name>
    <dbReference type="NCBI Taxonomy" id="262724"/>
    <lineage>
        <taxon>Bacteria</taxon>
        <taxon>Thermotogati</taxon>
        <taxon>Deinococcota</taxon>
        <taxon>Deinococci</taxon>
        <taxon>Thermales</taxon>
        <taxon>Thermaceae</taxon>
        <taxon>Thermus</taxon>
    </lineage>
</organism>
<keyword id="KW-0002">3D-structure</keyword>
<keyword id="KW-0963">Cytoplasm</keyword>
<keyword id="KW-0671">Queuosine biosynthesis</keyword>
<keyword id="KW-0949">S-adenosyl-L-methionine</keyword>
<keyword id="KW-0808">Transferase</keyword>
<protein>
    <recommendedName>
        <fullName evidence="1">S-adenosylmethionine:tRNA ribosyltransferase-isomerase</fullName>
        <ecNumber evidence="1">2.4.99.17</ecNumber>
    </recommendedName>
    <alternativeName>
        <fullName evidence="1">Queuosine biosynthesis protein QueA</fullName>
    </alternativeName>
</protein>
<comment type="function">
    <text evidence="1">Transfers and isomerizes the ribose moiety from AdoMet to the 7-aminomethyl group of 7-deazaguanine (preQ1-tRNA) to give epoxyqueuosine (oQ-tRNA).</text>
</comment>
<comment type="catalytic activity">
    <reaction evidence="1">
        <text>7-aminomethyl-7-carbaguanosine(34) in tRNA + S-adenosyl-L-methionine = epoxyqueuosine(34) in tRNA + adenine + L-methionine + 2 H(+)</text>
        <dbReference type="Rhea" id="RHEA:32155"/>
        <dbReference type="Rhea" id="RHEA-COMP:10342"/>
        <dbReference type="Rhea" id="RHEA-COMP:18582"/>
        <dbReference type="ChEBI" id="CHEBI:15378"/>
        <dbReference type="ChEBI" id="CHEBI:16708"/>
        <dbReference type="ChEBI" id="CHEBI:57844"/>
        <dbReference type="ChEBI" id="CHEBI:59789"/>
        <dbReference type="ChEBI" id="CHEBI:82833"/>
        <dbReference type="ChEBI" id="CHEBI:194443"/>
        <dbReference type="EC" id="2.4.99.17"/>
    </reaction>
</comment>
<comment type="pathway">
    <text evidence="1">tRNA modification; tRNA-queuosine biosynthesis.</text>
</comment>
<comment type="subunit">
    <text evidence="1">Monomer.</text>
</comment>
<comment type="subcellular location">
    <subcellularLocation>
        <location evidence="1">Cytoplasm</location>
    </subcellularLocation>
</comment>
<comment type="similarity">
    <text evidence="1">Belongs to the QueA family.</text>
</comment>
<proteinExistence type="evidence at protein level"/>
<accession>Q72JS5</accession>
<evidence type="ECO:0000255" key="1">
    <source>
        <dbReference type="HAMAP-Rule" id="MF_00113"/>
    </source>
</evidence>
<evidence type="ECO:0007829" key="2">
    <source>
        <dbReference type="PDB" id="1WDI"/>
    </source>
</evidence>
<name>QUEA_THET2</name>
<sequence>MEGLEAYDYHLPPEQIAQEGVEPRDMARLMVVYREGPFRVAHKRVRDLPEFLRPGDVLVFNESKVIPARLLARKPTGGKVEILLVRERSPGLWEALLGPARKAPPGTRLLLLSPKDLAPVPGLQAEVVAVEEDGVRLLRFQGDLVAHLEEVGEVPLPPYIKAKIPMERYQTVYARRPGSVAAPTAGLHFTPELLERLREMGVELRFLTLHVGPGTFRPVKGDPEKHEMHAEPYAIPEEVAEAVNRAKAEGRRVVAVGTTVVRALESAYREGVGVVAGEGETRLFIRPPYTFKVVDALFTNFHLPRSTLLMLVAAFLGRERTLEAYRLAVAEGYRFYSLGDAMLIL</sequence>
<dbReference type="EC" id="2.4.99.17" evidence="1"/>
<dbReference type="EMBL" id="AE017221">
    <property type="protein sequence ID" value="AAS81041.1"/>
    <property type="molecule type" value="Genomic_DNA"/>
</dbReference>
<dbReference type="RefSeq" id="WP_011173135.1">
    <property type="nucleotide sequence ID" value="NC_005835.1"/>
</dbReference>
<dbReference type="PDB" id="1WDI">
    <property type="method" value="X-ray"/>
    <property type="resolution" value="2.10 A"/>
    <property type="chains" value="A=1-345"/>
</dbReference>
<dbReference type="PDBsum" id="1WDI"/>
<dbReference type="SMR" id="Q72JS5"/>
<dbReference type="GeneID" id="3169205"/>
<dbReference type="KEGG" id="tth:TT_C0693"/>
<dbReference type="eggNOG" id="COG0809">
    <property type="taxonomic scope" value="Bacteria"/>
</dbReference>
<dbReference type="HOGENOM" id="CLU_039110_1_1_0"/>
<dbReference type="OrthoDB" id="9805933at2"/>
<dbReference type="UniPathway" id="UPA00392"/>
<dbReference type="EvolutionaryTrace" id="Q72JS5"/>
<dbReference type="Proteomes" id="UP000000592">
    <property type="component" value="Chromosome"/>
</dbReference>
<dbReference type="GO" id="GO:0005737">
    <property type="term" value="C:cytoplasm"/>
    <property type="evidence" value="ECO:0007669"/>
    <property type="project" value="UniProtKB-SubCell"/>
</dbReference>
<dbReference type="GO" id="GO:0051075">
    <property type="term" value="F:S-adenosylmethionine:tRNA ribosyltransferase-isomerase activity"/>
    <property type="evidence" value="ECO:0007669"/>
    <property type="project" value="UniProtKB-EC"/>
</dbReference>
<dbReference type="GO" id="GO:0008616">
    <property type="term" value="P:queuosine biosynthetic process"/>
    <property type="evidence" value="ECO:0007669"/>
    <property type="project" value="UniProtKB-UniRule"/>
</dbReference>
<dbReference type="GO" id="GO:0002099">
    <property type="term" value="P:tRNA wobble guanine modification"/>
    <property type="evidence" value="ECO:0007669"/>
    <property type="project" value="TreeGrafter"/>
</dbReference>
<dbReference type="FunFam" id="2.40.10.240:FF:000002">
    <property type="entry name" value="S-adenosylmethionine:tRNA ribosyltransferase-isomerase"/>
    <property type="match status" value="1"/>
</dbReference>
<dbReference type="FunFam" id="3.40.1780.10:FF:000001">
    <property type="entry name" value="S-adenosylmethionine:tRNA ribosyltransferase-isomerase"/>
    <property type="match status" value="1"/>
</dbReference>
<dbReference type="Gene3D" id="2.40.10.240">
    <property type="entry name" value="QueA-like"/>
    <property type="match status" value="1"/>
</dbReference>
<dbReference type="Gene3D" id="3.40.1780.10">
    <property type="entry name" value="QueA-like"/>
    <property type="match status" value="1"/>
</dbReference>
<dbReference type="HAMAP" id="MF_00113">
    <property type="entry name" value="QueA"/>
    <property type="match status" value="1"/>
</dbReference>
<dbReference type="InterPro" id="IPR003699">
    <property type="entry name" value="QueA"/>
</dbReference>
<dbReference type="InterPro" id="IPR042118">
    <property type="entry name" value="QueA_dom1"/>
</dbReference>
<dbReference type="InterPro" id="IPR042119">
    <property type="entry name" value="QueA_dom2"/>
</dbReference>
<dbReference type="InterPro" id="IPR036100">
    <property type="entry name" value="QueA_sf"/>
</dbReference>
<dbReference type="NCBIfam" id="NF001140">
    <property type="entry name" value="PRK00147.1"/>
    <property type="match status" value="1"/>
</dbReference>
<dbReference type="NCBIfam" id="TIGR00113">
    <property type="entry name" value="queA"/>
    <property type="match status" value="1"/>
</dbReference>
<dbReference type="PANTHER" id="PTHR30307">
    <property type="entry name" value="S-ADENOSYLMETHIONINE:TRNA RIBOSYLTRANSFERASE-ISOMERASE"/>
    <property type="match status" value="1"/>
</dbReference>
<dbReference type="PANTHER" id="PTHR30307:SF0">
    <property type="entry name" value="S-ADENOSYLMETHIONINE:TRNA RIBOSYLTRANSFERASE-ISOMERASE"/>
    <property type="match status" value="1"/>
</dbReference>
<dbReference type="Pfam" id="PF02547">
    <property type="entry name" value="Queuosine_synth"/>
    <property type="match status" value="1"/>
</dbReference>
<dbReference type="SUPFAM" id="SSF111337">
    <property type="entry name" value="QueA-like"/>
    <property type="match status" value="1"/>
</dbReference>
<feature type="chain" id="PRO_0000231384" description="S-adenosylmethionine:tRNA ribosyltransferase-isomerase">
    <location>
        <begin position="1"/>
        <end position="345"/>
    </location>
</feature>
<feature type="helix" evidence="2">
    <location>
        <begin position="3"/>
        <end position="7"/>
    </location>
</feature>
<feature type="helix" evidence="2">
    <location>
        <begin position="13"/>
        <end position="15"/>
    </location>
</feature>
<feature type="helix" evidence="2">
    <location>
        <begin position="24"/>
        <end position="26"/>
    </location>
</feature>
<feature type="strand" evidence="2">
    <location>
        <begin position="27"/>
        <end position="37"/>
    </location>
</feature>
<feature type="strand" evidence="2">
    <location>
        <begin position="40"/>
        <end position="44"/>
    </location>
</feature>
<feature type="helix" evidence="2">
    <location>
        <begin position="45"/>
        <end position="47"/>
    </location>
</feature>
<feature type="helix" evidence="2">
    <location>
        <begin position="48"/>
        <end position="51"/>
    </location>
</feature>
<feature type="strand" evidence="2">
    <location>
        <begin position="57"/>
        <end position="65"/>
    </location>
</feature>
<feature type="strand" evidence="2">
    <location>
        <begin position="68"/>
        <end position="73"/>
    </location>
</feature>
<feature type="strand" evidence="2">
    <location>
        <begin position="79"/>
        <end position="84"/>
    </location>
</feature>
<feature type="strand" evidence="2">
    <location>
        <begin position="107"/>
        <end position="111"/>
    </location>
</feature>
<feature type="turn" evidence="2">
    <location>
        <begin position="113"/>
        <end position="116"/>
    </location>
</feature>
<feature type="strand" evidence="2">
    <location>
        <begin position="119"/>
        <end position="126"/>
    </location>
</feature>
<feature type="strand" evidence="2">
    <location>
        <begin position="146"/>
        <end position="149"/>
    </location>
</feature>
<feature type="helix" evidence="2">
    <location>
        <begin position="185"/>
        <end position="188"/>
    </location>
</feature>
<feature type="helix" evidence="2">
    <location>
        <begin position="191"/>
        <end position="199"/>
    </location>
</feature>
<feature type="strand" evidence="2">
    <location>
        <begin position="203"/>
        <end position="212"/>
    </location>
</feature>
<feature type="helix" evidence="2">
    <location>
        <begin position="213"/>
        <end position="215"/>
    </location>
</feature>
<feature type="strand" evidence="2">
    <location>
        <begin position="231"/>
        <end position="235"/>
    </location>
</feature>
<feature type="helix" evidence="2">
    <location>
        <begin position="237"/>
        <end position="248"/>
    </location>
</feature>
<feature type="strand" evidence="2">
    <location>
        <begin position="253"/>
        <end position="257"/>
    </location>
</feature>
<feature type="helix" evidence="2">
    <location>
        <begin position="258"/>
        <end position="266"/>
    </location>
</feature>
<feature type="turn" evidence="2">
    <location>
        <begin position="270"/>
        <end position="272"/>
    </location>
</feature>
<feature type="strand" evidence="2">
    <location>
        <begin position="277"/>
        <end position="281"/>
    </location>
</feature>
<feature type="strand" evidence="2">
    <location>
        <begin position="295"/>
        <end position="300"/>
    </location>
</feature>
<feature type="helix" evidence="2">
    <location>
        <begin position="307"/>
        <end position="316"/>
    </location>
</feature>
<feature type="helix" evidence="2">
    <location>
        <begin position="318"/>
        <end position="330"/>
    </location>
</feature>
<feature type="strand" evidence="2">
    <location>
        <begin position="341"/>
        <end position="345"/>
    </location>
</feature>
<reference key="1">
    <citation type="journal article" date="2004" name="Nat. Biotechnol.">
        <title>The genome sequence of the extreme thermophile Thermus thermophilus.</title>
        <authorList>
            <person name="Henne A."/>
            <person name="Brueggemann H."/>
            <person name="Raasch C."/>
            <person name="Wiezer A."/>
            <person name="Hartsch T."/>
            <person name="Liesegang H."/>
            <person name="Johann A."/>
            <person name="Lienard T."/>
            <person name="Gohl O."/>
            <person name="Martinez-Arias R."/>
            <person name="Jacobi C."/>
            <person name="Starkuviene V."/>
            <person name="Schlenczeck S."/>
            <person name="Dencker S."/>
            <person name="Huber R."/>
            <person name="Klenk H.-P."/>
            <person name="Kramer W."/>
            <person name="Merkl R."/>
            <person name="Gottschalk G."/>
            <person name="Fritz H.-J."/>
        </authorList>
    </citation>
    <scope>NUCLEOTIDE SEQUENCE [LARGE SCALE GENOMIC DNA]</scope>
    <source>
        <strain>ATCC BAA-163 / DSM 7039 / HB27</strain>
    </source>
</reference>